<accession>B5Z3V4</accession>
<organism>
    <name type="scientific">Escherichia coli O157:H7 (strain EC4115 / EHEC)</name>
    <dbReference type="NCBI Taxonomy" id="444450"/>
    <lineage>
        <taxon>Bacteria</taxon>
        <taxon>Pseudomonadati</taxon>
        <taxon>Pseudomonadota</taxon>
        <taxon>Gammaproteobacteria</taxon>
        <taxon>Enterobacterales</taxon>
        <taxon>Enterobacteriaceae</taxon>
        <taxon>Escherichia</taxon>
    </lineage>
</organism>
<protein>
    <recommendedName>
        <fullName evidence="1">HMP-PP phosphatase</fullName>
        <ecNumber evidence="1">3.6.1.-</ecNumber>
    </recommendedName>
</protein>
<sequence>MARLAAFDMDGTLLMPDHHLGEKTLSTLARLRERDITLTFATGRHALEMQHILGAISLDAYLITGNGTRVHSLEGELLHRDDLPADVAELVLYQQWDTRASMHIFNDDGWFTGKEIPALLQAFVYSGFRYQIIDVKKMPLGSVTKICFCGDHDDLTRLQIQLHEALGERAHLCFSATDCLEVLPVGCNKGAALTVLTQHLGLSLRDCMAFGDAMNDREMLGSVGSGFIMGNAMPQLRAELPHLPVIGHCRNQAVSHYLTHWLDYPHLPYSPE</sequence>
<proteinExistence type="inferred from homology"/>
<evidence type="ECO:0000255" key="1">
    <source>
        <dbReference type="HAMAP-Rule" id="MF_01847"/>
    </source>
</evidence>
<name>COF_ECO5E</name>
<comment type="function">
    <text evidence="1">Catalyzes the hydrolysis of 4-amino-2-methyl-5-hydroxymethylpyrimidine pyrophosphate (HMP-PP) to 4-amino-2-methyl-5-hydroxymethylpyrimidine phosphate (HMP-P).</text>
</comment>
<comment type="catalytic activity">
    <reaction evidence="1">
        <text>4-amino-2-methyl-5-(diphosphooxymethyl)pyrimidine + H2O = 4-amino-2-methyl-5-(phosphooxymethyl)pyrimidine + phosphate + H(+)</text>
        <dbReference type="Rhea" id="RHEA:27914"/>
        <dbReference type="ChEBI" id="CHEBI:15377"/>
        <dbReference type="ChEBI" id="CHEBI:15378"/>
        <dbReference type="ChEBI" id="CHEBI:43474"/>
        <dbReference type="ChEBI" id="CHEBI:57841"/>
        <dbReference type="ChEBI" id="CHEBI:58354"/>
    </reaction>
</comment>
<comment type="cofactor">
    <cofactor evidence="1">
        <name>Mg(2+)</name>
        <dbReference type="ChEBI" id="CHEBI:18420"/>
    </cofactor>
</comment>
<comment type="similarity">
    <text evidence="1">Belongs to the HAD-like hydrolase superfamily. Cof family.</text>
</comment>
<gene>
    <name evidence="1" type="primary">cof</name>
    <name type="ordered locus">ECH74115_0534</name>
</gene>
<reference key="1">
    <citation type="journal article" date="2011" name="Proc. Natl. Acad. Sci. U.S.A.">
        <title>Genomic anatomy of Escherichia coli O157:H7 outbreaks.</title>
        <authorList>
            <person name="Eppinger M."/>
            <person name="Mammel M.K."/>
            <person name="Leclerc J.E."/>
            <person name="Ravel J."/>
            <person name="Cebula T.A."/>
        </authorList>
    </citation>
    <scope>NUCLEOTIDE SEQUENCE [LARGE SCALE GENOMIC DNA]</scope>
    <source>
        <strain>EC4115 / EHEC</strain>
    </source>
</reference>
<dbReference type="EC" id="3.6.1.-" evidence="1"/>
<dbReference type="EMBL" id="CP001164">
    <property type="protein sequence ID" value="ACI34934.1"/>
    <property type="molecule type" value="Genomic_DNA"/>
</dbReference>
<dbReference type="RefSeq" id="WP_001301796.1">
    <property type="nucleotide sequence ID" value="NC_011353.1"/>
</dbReference>
<dbReference type="SMR" id="B5Z3V4"/>
<dbReference type="KEGG" id="ecf:ECH74115_0534"/>
<dbReference type="HOGENOM" id="CLU_044146_5_2_6"/>
<dbReference type="GO" id="GO:0002145">
    <property type="term" value="F:4-amino-5-hydroxymethyl-2-methylpyrimidine diphosphatase activity"/>
    <property type="evidence" value="ECO:0007669"/>
    <property type="project" value="RHEA"/>
</dbReference>
<dbReference type="GO" id="GO:0000287">
    <property type="term" value="F:magnesium ion binding"/>
    <property type="evidence" value="ECO:0000250"/>
    <property type="project" value="UniProtKB"/>
</dbReference>
<dbReference type="GO" id="GO:0016791">
    <property type="term" value="F:phosphatase activity"/>
    <property type="evidence" value="ECO:0000250"/>
    <property type="project" value="UniProtKB"/>
</dbReference>
<dbReference type="CDD" id="cd07516">
    <property type="entry name" value="HAD_Pase"/>
    <property type="match status" value="1"/>
</dbReference>
<dbReference type="FunFam" id="3.30.1240.10:FF:000002">
    <property type="entry name" value="HMP-PP phosphatase"/>
    <property type="match status" value="1"/>
</dbReference>
<dbReference type="Gene3D" id="3.30.1240.10">
    <property type="match status" value="1"/>
</dbReference>
<dbReference type="Gene3D" id="3.40.50.1000">
    <property type="entry name" value="HAD superfamily/HAD-like"/>
    <property type="match status" value="1"/>
</dbReference>
<dbReference type="HAMAP" id="MF_01847">
    <property type="entry name" value="HMP_PP_phosphat"/>
    <property type="match status" value="1"/>
</dbReference>
<dbReference type="InterPro" id="IPR000150">
    <property type="entry name" value="Cof"/>
</dbReference>
<dbReference type="InterPro" id="IPR036412">
    <property type="entry name" value="HAD-like_sf"/>
</dbReference>
<dbReference type="InterPro" id="IPR006379">
    <property type="entry name" value="HAD-SF_hydro_IIB"/>
</dbReference>
<dbReference type="InterPro" id="IPR023214">
    <property type="entry name" value="HAD_sf"/>
</dbReference>
<dbReference type="InterPro" id="IPR023938">
    <property type="entry name" value="HMP-PP_phosphatase"/>
</dbReference>
<dbReference type="NCBIfam" id="TIGR00099">
    <property type="entry name" value="Cof-subfamily"/>
    <property type="match status" value="1"/>
</dbReference>
<dbReference type="NCBIfam" id="TIGR01484">
    <property type="entry name" value="HAD-SF-IIB"/>
    <property type="match status" value="1"/>
</dbReference>
<dbReference type="NCBIfam" id="NF011705">
    <property type="entry name" value="PRK15126.1"/>
    <property type="match status" value="1"/>
</dbReference>
<dbReference type="PANTHER" id="PTHR47267">
    <property type="match status" value="1"/>
</dbReference>
<dbReference type="PANTHER" id="PTHR47267:SF2">
    <property type="entry name" value="HMP-PP PHOSPHATASE"/>
    <property type="match status" value="1"/>
</dbReference>
<dbReference type="Pfam" id="PF08282">
    <property type="entry name" value="Hydrolase_3"/>
    <property type="match status" value="1"/>
</dbReference>
<dbReference type="SFLD" id="SFLDG01140">
    <property type="entry name" value="C2.B:_Phosphomannomutase_and_P"/>
    <property type="match status" value="1"/>
</dbReference>
<dbReference type="SFLD" id="SFLDS00003">
    <property type="entry name" value="Haloacid_Dehalogenase"/>
    <property type="match status" value="1"/>
</dbReference>
<dbReference type="SUPFAM" id="SSF56784">
    <property type="entry name" value="HAD-like"/>
    <property type="match status" value="1"/>
</dbReference>
<dbReference type="PROSITE" id="PS01228">
    <property type="entry name" value="COF_1"/>
    <property type="match status" value="1"/>
</dbReference>
<dbReference type="PROSITE" id="PS01229">
    <property type="entry name" value="COF_2"/>
    <property type="match status" value="1"/>
</dbReference>
<keyword id="KW-0378">Hydrolase</keyword>
<keyword id="KW-0460">Magnesium</keyword>
<keyword id="KW-0479">Metal-binding</keyword>
<feature type="chain" id="PRO_1000188498" description="HMP-PP phosphatase">
    <location>
        <begin position="1"/>
        <end position="272"/>
    </location>
</feature>
<feature type="active site" description="Nucleophile" evidence="1">
    <location>
        <position position="8"/>
    </location>
</feature>
<feature type="binding site" evidence="1">
    <location>
        <position position="8"/>
    </location>
    <ligand>
        <name>Mg(2+)</name>
        <dbReference type="ChEBI" id="CHEBI:18420"/>
    </ligand>
</feature>
<feature type="binding site" evidence="1">
    <location>
        <position position="10"/>
    </location>
    <ligand>
        <name>Mg(2+)</name>
        <dbReference type="ChEBI" id="CHEBI:18420"/>
    </ligand>
</feature>
<feature type="binding site" evidence="1">
    <location>
        <position position="212"/>
    </location>
    <ligand>
        <name>Mg(2+)</name>
        <dbReference type="ChEBI" id="CHEBI:18420"/>
    </ligand>
</feature>